<proteinExistence type="evidence at protein level"/>
<comment type="function">
    <text>May recruit HDACs to the p160 coactivators/nuclear receptor complex to inhibit ligand-dependent transactivation.</text>
</comment>
<comment type="subunit">
    <text evidence="3">Interacts with the PAS region of the p160 coactivators.</text>
</comment>
<comment type="subcellular location">
    <subcellularLocation>
        <location evidence="3 6">Nucleus</location>
    </subcellularLocation>
</comment>
<comment type="alternative products">
    <event type="alternative splicing"/>
    <isoform>
        <id>Q6UB98-1</id>
        <name>1</name>
        <sequence type="displayed"/>
    </isoform>
    <isoform>
        <id>Q6UB98-2</id>
        <name>2</name>
        <sequence type="described" ref="VSP_010901"/>
    </isoform>
</comment>
<comment type="sequence caution" evidence="9">
    <conflict type="miscellaneous discrepancy">
        <sequence resource="EMBL-CDS" id="BAB15014"/>
    </conflict>
    <text>Contaminating sequence. Potential poly-A sequence.</text>
</comment>
<evidence type="ECO:0000256" key="1">
    <source>
        <dbReference type="SAM" id="MobiDB-lite"/>
    </source>
</evidence>
<evidence type="ECO:0000269" key="2">
    <source>
    </source>
</evidence>
<evidence type="ECO:0000269" key="3">
    <source>
    </source>
</evidence>
<evidence type="ECO:0000269" key="4">
    <source>
    </source>
</evidence>
<evidence type="ECO:0000269" key="5">
    <source>
    </source>
</evidence>
<evidence type="ECO:0000269" key="6">
    <source ref="2"/>
</evidence>
<evidence type="ECO:0000303" key="7">
    <source>
    </source>
</evidence>
<evidence type="ECO:0000303" key="8">
    <source>
    </source>
</evidence>
<evidence type="ECO:0000305" key="9"/>
<evidence type="ECO:0007744" key="10">
    <source>
    </source>
</evidence>
<evidence type="ECO:0007744" key="11">
    <source>
    </source>
</evidence>
<evidence type="ECO:0007744" key="12">
    <source>
    </source>
</evidence>
<reference key="1">
    <citation type="submission" date="2000-10" db="EMBL/GenBank/DDBJ databases">
        <title>GAC-1 protein containing ankyrin repeats.</title>
        <authorList>
            <person name="Ilyin G.P."/>
        </authorList>
    </citation>
    <scope>NUCLEOTIDE SEQUENCE [MRNA] (ISOFORM 1)</scope>
</reference>
<reference key="2">
    <citation type="submission" date="2003-08" db="EMBL/GenBank/DDBJ databases">
        <title>ANKRD11 and ANKRD12 are novel 9kb genes encoding nuclear-located proteins with ankyrin domains.</title>
        <authorList>
            <person name="Powell J.A."/>
            <person name="Settasatian C."/>
            <person name="Lower K."/>
            <person name="Callen D.F."/>
        </authorList>
    </citation>
    <scope>NUCLEOTIDE SEQUENCE [MRNA] (ISOFORM 1)</scope>
    <scope>VARIANT THR-171</scope>
    <scope>SUBCELLULAR LOCATION</scope>
</reference>
<reference key="3">
    <citation type="journal article" date="2004" name="J. Biol. Chem.">
        <title>Identification of a novel family of ankyrin repeats-containing cofactors for p160 nuclear receptor coactivators.</title>
        <authorList>
            <person name="Zhang A."/>
            <person name="Yeung P.L."/>
            <person name="Li C.-W."/>
            <person name="Tsai S.-C."/>
            <person name="Dinh G.K."/>
            <person name="Wu X."/>
            <person name="Li H."/>
            <person name="Chen J.D."/>
        </authorList>
    </citation>
    <scope>NUCLEOTIDE SEQUENCE [MRNA] (ISOFORM 2)</scope>
    <scope>SUBCELLULAR LOCATION</scope>
    <scope>INTERACTION WITH P160</scope>
</reference>
<reference key="4">
    <citation type="submission" date="2005-09" db="EMBL/GenBank/DDBJ databases">
        <authorList>
            <person name="Chen J.D."/>
        </authorList>
    </citation>
    <scope>SEQUENCE REVISION</scope>
</reference>
<reference key="5">
    <citation type="journal article" date="2007" name="BMC Genomics">
        <title>The full-ORF clone resource of the German cDNA consortium.</title>
        <authorList>
            <person name="Bechtel S."/>
            <person name="Rosenfelder H."/>
            <person name="Duda A."/>
            <person name="Schmidt C.P."/>
            <person name="Ernst U."/>
            <person name="Wellenreuther R."/>
            <person name="Mehrle A."/>
            <person name="Schuster C."/>
            <person name="Bahr A."/>
            <person name="Bloecker H."/>
            <person name="Heubner D."/>
            <person name="Hoerlein A."/>
            <person name="Michel G."/>
            <person name="Wedler H."/>
            <person name="Koehrer K."/>
            <person name="Ottenwaelder B."/>
            <person name="Poustka A."/>
            <person name="Wiemann S."/>
            <person name="Schupp I."/>
        </authorList>
    </citation>
    <scope>NUCLEOTIDE SEQUENCE [LARGE SCALE MRNA] (ISOFORM 2)</scope>
    <scope>VARIANT ARG-906</scope>
    <source>
        <tissue>Testis</tissue>
    </source>
</reference>
<reference key="6">
    <citation type="journal article" date="2004" name="Nat. Genet.">
        <title>Complete sequencing and characterization of 21,243 full-length human cDNAs.</title>
        <authorList>
            <person name="Ota T."/>
            <person name="Suzuki Y."/>
            <person name="Nishikawa T."/>
            <person name="Otsuki T."/>
            <person name="Sugiyama T."/>
            <person name="Irie R."/>
            <person name="Wakamatsu A."/>
            <person name="Hayashi K."/>
            <person name="Sato H."/>
            <person name="Nagai K."/>
            <person name="Kimura K."/>
            <person name="Makita H."/>
            <person name="Sekine M."/>
            <person name="Obayashi M."/>
            <person name="Nishi T."/>
            <person name="Shibahara T."/>
            <person name="Tanaka T."/>
            <person name="Ishii S."/>
            <person name="Yamamoto J."/>
            <person name="Saito K."/>
            <person name="Kawai Y."/>
            <person name="Isono Y."/>
            <person name="Nakamura Y."/>
            <person name="Nagahari K."/>
            <person name="Murakami K."/>
            <person name="Yasuda T."/>
            <person name="Iwayanagi T."/>
            <person name="Wagatsuma M."/>
            <person name="Shiratori A."/>
            <person name="Sudo H."/>
            <person name="Hosoiri T."/>
            <person name="Kaku Y."/>
            <person name="Kodaira H."/>
            <person name="Kondo H."/>
            <person name="Sugawara M."/>
            <person name="Takahashi M."/>
            <person name="Kanda K."/>
            <person name="Yokoi T."/>
            <person name="Furuya T."/>
            <person name="Kikkawa E."/>
            <person name="Omura Y."/>
            <person name="Abe K."/>
            <person name="Kamihara K."/>
            <person name="Katsuta N."/>
            <person name="Sato K."/>
            <person name="Tanikawa M."/>
            <person name="Yamazaki M."/>
            <person name="Ninomiya K."/>
            <person name="Ishibashi T."/>
            <person name="Yamashita H."/>
            <person name="Murakawa K."/>
            <person name="Fujimori K."/>
            <person name="Tanai H."/>
            <person name="Kimata M."/>
            <person name="Watanabe M."/>
            <person name="Hiraoka S."/>
            <person name="Chiba Y."/>
            <person name="Ishida S."/>
            <person name="Ono Y."/>
            <person name="Takiguchi S."/>
            <person name="Watanabe S."/>
            <person name="Yosida M."/>
            <person name="Hotuta T."/>
            <person name="Kusano J."/>
            <person name="Kanehori K."/>
            <person name="Takahashi-Fujii A."/>
            <person name="Hara H."/>
            <person name="Tanase T.-O."/>
            <person name="Nomura Y."/>
            <person name="Togiya S."/>
            <person name="Komai F."/>
            <person name="Hara R."/>
            <person name="Takeuchi K."/>
            <person name="Arita M."/>
            <person name="Imose N."/>
            <person name="Musashino K."/>
            <person name="Yuuki H."/>
            <person name="Oshima A."/>
            <person name="Sasaki N."/>
            <person name="Aotsuka S."/>
            <person name="Yoshikawa Y."/>
            <person name="Matsunawa H."/>
            <person name="Ichihara T."/>
            <person name="Shiohata N."/>
            <person name="Sano S."/>
            <person name="Moriya S."/>
            <person name="Momiyama H."/>
            <person name="Satoh N."/>
            <person name="Takami S."/>
            <person name="Terashima Y."/>
            <person name="Suzuki O."/>
            <person name="Nakagawa S."/>
            <person name="Senoh A."/>
            <person name="Mizoguchi H."/>
            <person name="Goto Y."/>
            <person name="Shimizu F."/>
            <person name="Wakebe H."/>
            <person name="Hishigaki H."/>
            <person name="Watanabe T."/>
            <person name="Sugiyama A."/>
            <person name="Takemoto M."/>
            <person name="Kawakami B."/>
            <person name="Yamazaki M."/>
            <person name="Watanabe K."/>
            <person name="Kumagai A."/>
            <person name="Itakura S."/>
            <person name="Fukuzumi Y."/>
            <person name="Fujimori Y."/>
            <person name="Komiyama M."/>
            <person name="Tashiro H."/>
            <person name="Tanigami A."/>
            <person name="Fujiwara T."/>
            <person name="Ono T."/>
            <person name="Yamada K."/>
            <person name="Fujii Y."/>
            <person name="Ozaki K."/>
            <person name="Hirao M."/>
            <person name="Ohmori Y."/>
            <person name="Kawabata A."/>
            <person name="Hikiji T."/>
            <person name="Kobatake N."/>
            <person name="Inagaki H."/>
            <person name="Ikema Y."/>
            <person name="Okamoto S."/>
            <person name="Okitani R."/>
            <person name="Kawakami T."/>
            <person name="Noguchi S."/>
            <person name="Itoh T."/>
            <person name="Shigeta K."/>
            <person name="Senba T."/>
            <person name="Matsumura K."/>
            <person name="Nakajima Y."/>
            <person name="Mizuno T."/>
            <person name="Morinaga M."/>
            <person name="Sasaki M."/>
            <person name="Togashi T."/>
            <person name="Oyama M."/>
            <person name="Hata H."/>
            <person name="Watanabe M."/>
            <person name="Komatsu T."/>
            <person name="Mizushima-Sugano J."/>
            <person name="Satoh T."/>
            <person name="Shirai Y."/>
            <person name="Takahashi Y."/>
            <person name="Nakagawa K."/>
            <person name="Okumura K."/>
            <person name="Nagase T."/>
            <person name="Nomura N."/>
            <person name="Kikuchi H."/>
            <person name="Masuho Y."/>
            <person name="Yamashita R."/>
            <person name="Nakai K."/>
            <person name="Yada T."/>
            <person name="Nakamura Y."/>
            <person name="Ohara O."/>
            <person name="Isogai T."/>
            <person name="Sugano S."/>
        </authorList>
    </citation>
    <scope>NUCLEOTIDE SEQUENCE [LARGE SCALE MRNA] OF 1-484</scope>
    <scope>VARIANT THR-171</scope>
</reference>
<reference key="7">
    <citation type="journal article" date="1998" name="DNA Res.">
        <title>Prediction of the coding sequences of unidentified human genes. XII. The complete sequences of 100 new cDNA clones from brain which code for large proteins in vitro.</title>
        <authorList>
            <person name="Nagase T."/>
            <person name="Ishikawa K."/>
            <person name="Suyama M."/>
            <person name="Kikuno R."/>
            <person name="Hirosawa M."/>
            <person name="Miyajima N."/>
            <person name="Tanaka A."/>
            <person name="Kotani H."/>
            <person name="Nomura N."/>
            <person name="Ohara O."/>
        </authorList>
    </citation>
    <scope>NUCLEOTIDE SEQUENCE [LARGE SCALE MRNA] OF 1462-2062</scope>
    <source>
        <tissue>Brain</tissue>
    </source>
</reference>
<reference key="8">
    <citation type="journal article" date="2008" name="J. Proteome Res.">
        <title>Phosphoproteome of resting human platelets.</title>
        <authorList>
            <person name="Zahedi R.P."/>
            <person name="Lewandrowski U."/>
            <person name="Wiesner J."/>
            <person name="Wortelkamp S."/>
            <person name="Moebius J."/>
            <person name="Schuetz C."/>
            <person name="Walter U."/>
            <person name="Gambaryan S."/>
            <person name="Sickmann A."/>
        </authorList>
    </citation>
    <scope>PHOSPHORYLATION [LARGE SCALE ANALYSIS] AT SER-861</scope>
    <scope>IDENTIFICATION BY MASS SPECTROMETRY [LARGE SCALE ANALYSIS]</scope>
    <source>
        <tissue>Platelet</tissue>
    </source>
</reference>
<reference key="9">
    <citation type="journal article" date="2008" name="Proc. Natl. Acad. Sci. U.S.A.">
        <title>A quantitative atlas of mitotic phosphorylation.</title>
        <authorList>
            <person name="Dephoure N."/>
            <person name="Zhou C."/>
            <person name="Villen J."/>
            <person name="Beausoleil S.A."/>
            <person name="Bakalarski C.E."/>
            <person name="Elledge S.J."/>
            <person name="Gygi S.P."/>
        </authorList>
    </citation>
    <scope>PHOSPHORYLATION [LARGE SCALE ANALYSIS] AT SER-149</scope>
    <scope>IDENTIFICATION BY MASS SPECTROMETRY [LARGE SCALE ANALYSIS]</scope>
    <source>
        <tissue>Cervix carcinoma</tissue>
    </source>
</reference>
<reference key="10">
    <citation type="journal article" date="2013" name="J. Proteome Res.">
        <title>Toward a comprehensive characterization of a human cancer cell phosphoproteome.</title>
        <authorList>
            <person name="Zhou H."/>
            <person name="Di Palma S."/>
            <person name="Preisinger C."/>
            <person name="Peng M."/>
            <person name="Polat A.N."/>
            <person name="Heck A.J."/>
            <person name="Mohammed S."/>
        </authorList>
    </citation>
    <scope>PHOSPHORYLATION [LARGE SCALE ANALYSIS] AT SER-149; SER-543; SER-630 AND SER-1401</scope>
    <scope>IDENTIFICATION BY MASS SPECTROMETRY [LARGE SCALE ANALYSIS]</scope>
    <source>
        <tissue>Cervix carcinoma</tissue>
        <tissue>Erythroleukemia</tissue>
    </source>
</reference>
<reference key="11">
    <citation type="journal article" date="2019" name="Mol. Psychiatry">
        <title>A set of regulatory genes co-expressed in embryonic human brain is implicated in disrupted speech development.</title>
        <authorList>
            <person name="Eising E."/>
            <person name="Carrion-Castillo A."/>
            <person name="Vino A."/>
            <person name="Strand E.A."/>
            <person name="Jakielski K.J."/>
            <person name="Scerri T.S."/>
            <person name="Hildebrand M.S."/>
            <person name="Webster R."/>
            <person name="Ma A."/>
            <person name="Mazoyer B."/>
            <person name="Francks C."/>
            <person name="Bahlo M."/>
            <person name="Scheffer I.E."/>
            <person name="Morgan A.T."/>
            <person name="Shriberg L.D."/>
            <person name="Fisher S.E."/>
        </authorList>
    </citation>
    <scope>VARIANT CYS-307</scope>
</reference>
<name>ANR12_HUMAN</name>
<dbReference type="EMBL" id="AF317425">
    <property type="protein sequence ID" value="AAG38609.1"/>
    <property type="molecule type" value="mRNA"/>
</dbReference>
<dbReference type="EMBL" id="AY373757">
    <property type="protein sequence ID" value="AAR25662.1"/>
    <property type="molecule type" value="mRNA"/>
</dbReference>
<dbReference type="EMBL" id="AY533564">
    <property type="protein sequence ID" value="AAS45545.2"/>
    <property type="molecule type" value="mRNA"/>
</dbReference>
<dbReference type="EMBL" id="AL834204">
    <property type="protein sequence ID" value="CAH56382.1"/>
    <property type="molecule type" value="mRNA"/>
</dbReference>
<dbReference type="EMBL" id="AK024808">
    <property type="protein sequence ID" value="BAB15014.1"/>
    <property type="status" value="ALT_SEQ"/>
    <property type="molecule type" value="mRNA"/>
</dbReference>
<dbReference type="EMBL" id="AB020681">
    <property type="protein sequence ID" value="BAA74897.1"/>
    <property type="molecule type" value="mRNA"/>
</dbReference>
<dbReference type="CCDS" id="CCDS11843.1">
    <molecule id="Q6UB98-1"/>
</dbReference>
<dbReference type="CCDS" id="CCDS42411.1">
    <molecule id="Q6UB98-2"/>
</dbReference>
<dbReference type="RefSeq" id="NP_001077094.1">
    <molecule id="Q6UB98-2"/>
    <property type="nucleotide sequence ID" value="NM_001083625.3"/>
</dbReference>
<dbReference type="RefSeq" id="NP_001190985.1">
    <molecule id="Q6UB98-2"/>
    <property type="nucleotide sequence ID" value="NM_001204056.1"/>
</dbReference>
<dbReference type="RefSeq" id="NP_056023.3">
    <molecule id="Q6UB98-1"/>
    <property type="nucleotide sequence ID" value="NM_015208.4"/>
</dbReference>
<dbReference type="RefSeq" id="XP_005258149.1">
    <property type="nucleotide sequence ID" value="XM_005258092.3"/>
</dbReference>
<dbReference type="RefSeq" id="XP_005258150.1">
    <molecule id="Q6UB98-1"/>
    <property type="nucleotide sequence ID" value="XM_005258093.5"/>
</dbReference>
<dbReference type="RefSeq" id="XP_016881152.1">
    <molecule id="Q6UB98-2"/>
    <property type="nucleotide sequence ID" value="XM_017025663.3"/>
</dbReference>
<dbReference type="RefSeq" id="XP_024306875.1">
    <molecule id="Q6UB98-1"/>
    <property type="nucleotide sequence ID" value="XM_024451107.2"/>
</dbReference>
<dbReference type="RefSeq" id="XP_047293341.1">
    <molecule id="Q6UB98-1"/>
    <property type="nucleotide sequence ID" value="XM_047437385.1"/>
</dbReference>
<dbReference type="RefSeq" id="XP_047293342.1">
    <molecule id="Q6UB98-1"/>
    <property type="nucleotide sequence ID" value="XM_047437386.1"/>
</dbReference>
<dbReference type="RefSeq" id="XP_047293344.1">
    <molecule id="Q6UB98-2"/>
    <property type="nucleotide sequence ID" value="XM_047437388.1"/>
</dbReference>
<dbReference type="RefSeq" id="XP_047293345.1">
    <molecule id="Q6UB98-2"/>
    <property type="nucleotide sequence ID" value="XM_047437389.1"/>
</dbReference>
<dbReference type="RefSeq" id="XP_047293346.1">
    <molecule id="Q6UB98-2"/>
    <property type="nucleotide sequence ID" value="XM_047437390.1"/>
</dbReference>
<dbReference type="SMR" id="Q6UB98"/>
<dbReference type="BioGRID" id="116857">
    <property type="interactions" value="38"/>
</dbReference>
<dbReference type="FunCoup" id="Q6UB98">
    <property type="interactions" value="2793"/>
</dbReference>
<dbReference type="IntAct" id="Q6UB98">
    <property type="interactions" value="22"/>
</dbReference>
<dbReference type="STRING" id="9606.ENSP00000262126"/>
<dbReference type="CarbonylDB" id="Q6UB98"/>
<dbReference type="GlyGen" id="Q6UB98">
    <property type="glycosylation" value="1 site, 1 O-linked glycan (1 site)"/>
</dbReference>
<dbReference type="iPTMnet" id="Q6UB98"/>
<dbReference type="PhosphoSitePlus" id="Q6UB98"/>
<dbReference type="BioMuta" id="ANKRD12"/>
<dbReference type="DMDM" id="160358772"/>
<dbReference type="jPOST" id="Q6UB98"/>
<dbReference type="MassIVE" id="Q6UB98"/>
<dbReference type="PaxDb" id="9606-ENSP00000262126"/>
<dbReference type="PeptideAtlas" id="Q6UB98"/>
<dbReference type="ProteomicsDB" id="67404">
    <molecule id="Q6UB98-1"/>
</dbReference>
<dbReference type="ProteomicsDB" id="67405">
    <molecule id="Q6UB98-2"/>
</dbReference>
<dbReference type="Pumba" id="Q6UB98"/>
<dbReference type="Antibodypedia" id="6510">
    <property type="antibodies" value="55 antibodies from 11 providers"/>
</dbReference>
<dbReference type="DNASU" id="23253"/>
<dbReference type="Ensembl" id="ENST00000262126.9">
    <molecule id="Q6UB98-1"/>
    <property type="protein sequence ID" value="ENSP00000262126.3"/>
    <property type="gene ID" value="ENSG00000101745.17"/>
</dbReference>
<dbReference type="Ensembl" id="ENST00000400020.7">
    <molecule id="Q6UB98-2"/>
    <property type="protein sequence ID" value="ENSP00000382897.3"/>
    <property type="gene ID" value="ENSG00000101745.17"/>
</dbReference>
<dbReference type="GeneID" id="23253"/>
<dbReference type="KEGG" id="hsa:23253"/>
<dbReference type="MANE-Select" id="ENST00000262126.9">
    <property type="protein sequence ID" value="ENSP00000262126.3"/>
    <property type="RefSeq nucleotide sequence ID" value="NM_015208.5"/>
    <property type="RefSeq protein sequence ID" value="NP_056023.3"/>
</dbReference>
<dbReference type="UCSC" id="uc002knv.4">
    <molecule id="Q6UB98-1"/>
    <property type="organism name" value="human"/>
</dbReference>
<dbReference type="AGR" id="HGNC:29135"/>
<dbReference type="CTD" id="23253"/>
<dbReference type="DisGeNET" id="23253"/>
<dbReference type="GeneCards" id="ANKRD12"/>
<dbReference type="HGNC" id="HGNC:29135">
    <property type="gene designation" value="ANKRD12"/>
</dbReference>
<dbReference type="HPA" id="ENSG00000101745">
    <property type="expression patterns" value="Low tissue specificity"/>
</dbReference>
<dbReference type="MIM" id="610616">
    <property type="type" value="gene"/>
</dbReference>
<dbReference type="neXtProt" id="NX_Q6UB98"/>
<dbReference type="OpenTargets" id="ENSG00000101745"/>
<dbReference type="PharmGKB" id="PA134899860"/>
<dbReference type="VEuPathDB" id="HostDB:ENSG00000101745"/>
<dbReference type="eggNOG" id="ENOG502QQG5">
    <property type="taxonomic scope" value="Eukaryota"/>
</dbReference>
<dbReference type="GeneTree" id="ENSGT00940000154742"/>
<dbReference type="HOGENOM" id="CLU_001632_0_0_1"/>
<dbReference type="InParanoid" id="Q6UB98"/>
<dbReference type="OMA" id="MTAVENC"/>
<dbReference type="OrthoDB" id="5806726at2759"/>
<dbReference type="PAN-GO" id="Q6UB98">
    <property type="GO annotations" value="1 GO annotation based on evolutionary models"/>
</dbReference>
<dbReference type="PhylomeDB" id="Q6UB98"/>
<dbReference type="TreeFam" id="TF326440"/>
<dbReference type="PathwayCommons" id="Q6UB98"/>
<dbReference type="SignaLink" id="Q6UB98"/>
<dbReference type="BioGRID-ORCS" id="23253">
    <property type="hits" value="19 hits in 1165 CRISPR screens"/>
</dbReference>
<dbReference type="ChiTaRS" id="ANKRD12">
    <property type="organism name" value="human"/>
</dbReference>
<dbReference type="GenomeRNAi" id="23253"/>
<dbReference type="Pharos" id="Q6UB98">
    <property type="development level" value="Tbio"/>
</dbReference>
<dbReference type="PRO" id="PR:Q6UB98"/>
<dbReference type="Proteomes" id="UP000005640">
    <property type="component" value="Chromosome 18"/>
</dbReference>
<dbReference type="RNAct" id="Q6UB98">
    <property type="molecule type" value="protein"/>
</dbReference>
<dbReference type="Bgee" id="ENSG00000101745">
    <property type="expression patterns" value="Expressed in calcaneal tendon and 199 other cell types or tissues"/>
</dbReference>
<dbReference type="ExpressionAtlas" id="Q6UB98">
    <property type="expression patterns" value="baseline and differential"/>
</dbReference>
<dbReference type="GO" id="GO:0005829">
    <property type="term" value="C:cytosol"/>
    <property type="evidence" value="ECO:0000314"/>
    <property type="project" value="HPA"/>
</dbReference>
<dbReference type="GO" id="GO:0005654">
    <property type="term" value="C:nucleoplasm"/>
    <property type="evidence" value="ECO:0000314"/>
    <property type="project" value="HPA"/>
</dbReference>
<dbReference type="FunFam" id="1.25.40.20:FF:000052">
    <property type="entry name" value="Ankyrin repeat domain-containing protein 12"/>
    <property type="match status" value="1"/>
</dbReference>
<dbReference type="Gene3D" id="1.25.40.20">
    <property type="entry name" value="Ankyrin repeat-containing domain"/>
    <property type="match status" value="1"/>
</dbReference>
<dbReference type="InterPro" id="IPR053210">
    <property type="entry name" value="ANKRD12"/>
</dbReference>
<dbReference type="InterPro" id="IPR002110">
    <property type="entry name" value="Ankyrin_rpt"/>
</dbReference>
<dbReference type="InterPro" id="IPR036770">
    <property type="entry name" value="Ankyrin_rpt-contain_sf"/>
</dbReference>
<dbReference type="PANTHER" id="PTHR24149">
    <property type="entry name" value="ANKYRIN REPEAT DOMAIN-CONTAINING PROTEIN 12"/>
    <property type="match status" value="1"/>
</dbReference>
<dbReference type="PANTHER" id="PTHR24149:SF16">
    <property type="entry name" value="ANKYRIN REPEAT DOMAIN-CONTAINING PROTEIN 12"/>
    <property type="match status" value="1"/>
</dbReference>
<dbReference type="Pfam" id="PF00023">
    <property type="entry name" value="Ank"/>
    <property type="match status" value="1"/>
</dbReference>
<dbReference type="Pfam" id="PF12796">
    <property type="entry name" value="Ank_2"/>
    <property type="match status" value="1"/>
</dbReference>
<dbReference type="PRINTS" id="PR01415">
    <property type="entry name" value="ANKYRIN"/>
</dbReference>
<dbReference type="SMART" id="SM00248">
    <property type="entry name" value="ANK"/>
    <property type="match status" value="3"/>
</dbReference>
<dbReference type="SUPFAM" id="SSF48403">
    <property type="entry name" value="Ankyrin repeat"/>
    <property type="match status" value="1"/>
</dbReference>
<dbReference type="PROSITE" id="PS50297">
    <property type="entry name" value="ANK_REP_REGION"/>
    <property type="match status" value="1"/>
</dbReference>
<dbReference type="PROSITE" id="PS50088">
    <property type="entry name" value="ANK_REPEAT"/>
    <property type="match status" value="3"/>
</dbReference>
<feature type="chain" id="PRO_0000066908" description="Ankyrin repeat domain-containing protein 12">
    <location>
        <begin position="1"/>
        <end position="2062"/>
    </location>
</feature>
<feature type="repeat" description="ANK 1">
    <location>
        <begin position="184"/>
        <end position="213"/>
    </location>
</feature>
<feature type="repeat" description="ANK 2">
    <location>
        <begin position="217"/>
        <end position="246"/>
    </location>
</feature>
<feature type="repeat" description="ANK 3">
    <location>
        <begin position="250"/>
        <end position="280"/>
    </location>
</feature>
<feature type="region of interest" description="Disordered" evidence="1">
    <location>
        <begin position="1"/>
        <end position="119"/>
    </location>
</feature>
<feature type="region of interest" description="Disordered" evidence="1">
    <location>
        <begin position="145"/>
        <end position="188"/>
    </location>
</feature>
<feature type="region of interest" description="Disordered" evidence="1">
    <location>
        <begin position="301"/>
        <end position="338"/>
    </location>
</feature>
<feature type="region of interest" description="Disordered" evidence="1">
    <location>
        <begin position="409"/>
        <end position="501"/>
    </location>
</feature>
<feature type="region of interest" description="Disordered" evidence="1">
    <location>
        <begin position="538"/>
        <end position="577"/>
    </location>
</feature>
<feature type="region of interest" description="Disordered" evidence="1">
    <location>
        <begin position="609"/>
        <end position="683"/>
    </location>
</feature>
<feature type="region of interest" description="Disordered" evidence="1">
    <location>
        <begin position="727"/>
        <end position="788"/>
    </location>
</feature>
<feature type="region of interest" description="Disordered" evidence="1">
    <location>
        <begin position="812"/>
        <end position="1073"/>
    </location>
</feature>
<feature type="region of interest" description="Disordered" evidence="1">
    <location>
        <begin position="1097"/>
        <end position="1227"/>
    </location>
</feature>
<feature type="region of interest" description="Disordered" evidence="1">
    <location>
        <begin position="1328"/>
        <end position="1350"/>
    </location>
</feature>
<feature type="region of interest" description="Disordered" evidence="1">
    <location>
        <begin position="1721"/>
        <end position="1744"/>
    </location>
</feature>
<feature type="region of interest" description="Disordered" evidence="1">
    <location>
        <begin position="1756"/>
        <end position="1795"/>
    </location>
</feature>
<feature type="compositionally biased region" description="Polar residues" evidence="1">
    <location>
        <begin position="9"/>
        <end position="20"/>
    </location>
</feature>
<feature type="compositionally biased region" description="Basic and acidic residues" evidence="1">
    <location>
        <begin position="41"/>
        <end position="57"/>
    </location>
</feature>
<feature type="compositionally biased region" description="Basic and acidic residues" evidence="1">
    <location>
        <begin position="100"/>
        <end position="117"/>
    </location>
</feature>
<feature type="compositionally biased region" description="Polar residues" evidence="1">
    <location>
        <begin position="145"/>
        <end position="172"/>
    </location>
</feature>
<feature type="compositionally biased region" description="Basic and acidic residues" evidence="1">
    <location>
        <begin position="173"/>
        <end position="187"/>
    </location>
</feature>
<feature type="compositionally biased region" description="Acidic residues" evidence="1">
    <location>
        <begin position="306"/>
        <end position="318"/>
    </location>
</feature>
<feature type="compositionally biased region" description="Polar residues" evidence="1">
    <location>
        <begin position="319"/>
        <end position="328"/>
    </location>
</feature>
<feature type="compositionally biased region" description="Polar residues" evidence="1">
    <location>
        <begin position="437"/>
        <end position="454"/>
    </location>
</feature>
<feature type="compositionally biased region" description="Basic and acidic residues" evidence="1">
    <location>
        <begin position="455"/>
        <end position="467"/>
    </location>
</feature>
<feature type="compositionally biased region" description="Basic residues" evidence="1">
    <location>
        <begin position="468"/>
        <end position="480"/>
    </location>
</feature>
<feature type="compositionally biased region" description="Basic and acidic residues" evidence="1">
    <location>
        <begin position="481"/>
        <end position="498"/>
    </location>
</feature>
<feature type="compositionally biased region" description="Polar residues" evidence="1">
    <location>
        <begin position="565"/>
        <end position="575"/>
    </location>
</feature>
<feature type="compositionally biased region" description="Basic and acidic residues" evidence="1">
    <location>
        <begin position="609"/>
        <end position="631"/>
    </location>
</feature>
<feature type="compositionally biased region" description="Basic and acidic residues" evidence="1">
    <location>
        <begin position="639"/>
        <end position="649"/>
    </location>
</feature>
<feature type="compositionally biased region" description="Basic and acidic residues" evidence="1">
    <location>
        <begin position="658"/>
        <end position="683"/>
    </location>
</feature>
<feature type="compositionally biased region" description="Basic and acidic residues" evidence="1">
    <location>
        <begin position="727"/>
        <end position="784"/>
    </location>
</feature>
<feature type="compositionally biased region" description="Basic and acidic residues" evidence="1">
    <location>
        <begin position="812"/>
        <end position="969"/>
    </location>
</feature>
<feature type="compositionally biased region" description="Basic and acidic residues" evidence="1">
    <location>
        <begin position="977"/>
        <end position="1037"/>
    </location>
</feature>
<feature type="compositionally biased region" description="Basic and acidic residues" evidence="1">
    <location>
        <begin position="1061"/>
        <end position="1072"/>
    </location>
</feature>
<feature type="compositionally biased region" description="Basic and acidic residues" evidence="1">
    <location>
        <begin position="1103"/>
        <end position="1157"/>
    </location>
</feature>
<feature type="compositionally biased region" description="Polar residues" evidence="1">
    <location>
        <begin position="1161"/>
        <end position="1189"/>
    </location>
</feature>
<feature type="compositionally biased region" description="Low complexity" evidence="1">
    <location>
        <begin position="1200"/>
        <end position="1213"/>
    </location>
</feature>
<feature type="compositionally biased region" description="Polar residues" evidence="1">
    <location>
        <begin position="1328"/>
        <end position="1344"/>
    </location>
</feature>
<feature type="compositionally biased region" description="Polar residues" evidence="1">
    <location>
        <begin position="1729"/>
        <end position="1744"/>
    </location>
</feature>
<feature type="modified residue" description="Phosphoserine" evidence="11 12">
    <location>
        <position position="149"/>
    </location>
</feature>
<feature type="modified residue" description="Phosphoserine" evidence="12">
    <location>
        <position position="543"/>
    </location>
</feature>
<feature type="modified residue" description="Phosphoserine" evidence="12">
    <location>
        <position position="630"/>
    </location>
</feature>
<feature type="modified residue" description="Phosphoserine" evidence="10">
    <location>
        <position position="861"/>
    </location>
</feature>
<feature type="modified residue" description="Phosphoserine" evidence="12">
    <location>
        <position position="1401"/>
    </location>
</feature>
<feature type="splice variant" id="VSP_010901" description="In isoform 2." evidence="7 8">
    <location>
        <begin position="79"/>
        <end position="101"/>
    </location>
</feature>
<feature type="sequence variant" id="VAR_019425" evidence="2 6">
    <original>S</original>
    <variation>T</variation>
    <location>
        <position position="171"/>
    </location>
</feature>
<feature type="sequence variant" id="VAR_026042" description="In dbSNP:rs2298548.">
    <original>P</original>
    <variation>A</variation>
    <location>
        <position position="277"/>
    </location>
</feature>
<feature type="sequence variant" id="VAR_081528" description="Found in a patient with childhood apraxia of speech; uncertain significance." evidence="5">
    <original>S</original>
    <variation>C</variation>
    <location>
        <position position="307"/>
    </location>
</feature>
<feature type="sequence variant" id="VAR_048271" description="In dbSNP:rs35101529.">
    <original>E</original>
    <variation>D</variation>
    <location>
        <position position="390"/>
    </location>
</feature>
<feature type="sequence variant" id="VAR_048272" description="In dbSNP:rs17498752.">
    <original>T</original>
    <variation>I</variation>
    <location>
        <position position="507"/>
    </location>
</feature>
<feature type="sequence variant" id="VAR_048273" description="In dbSNP:rs7243088.">
    <original>T</original>
    <variation>S</variation>
    <location>
        <position position="531"/>
    </location>
</feature>
<feature type="sequence variant" id="VAR_022088" description="In dbSNP:rs2298546.">
    <original>S</original>
    <variation>N</variation>
    <location>
        <position position="818"/>
    </location>
</feature>
<feature type="sequence variant" id="VAR_024173" description="In dbSNP:rs4798791." evidence="4">
    <original>K</original>
    <variation>R</variation>
    <location>
        <position position="906"/>
    </location>
</feature>
<feature type="sequence variant" id="VAR_048274" description="In dbSNP:rs34996750.">
    <original>L</original>
    <variation>S</variation>
    <location>
        <position position="998"/>
    </location>
</feature>
<feature type="sequence variant" id="VAR_048275" description="In dbSNP:rs3744822.">
    <original>S</original>
    <variation>P</variation>
    <location>
        <position position="1758"/>
    </location>
</feature>
<feature type="sequence conflict" description="In Ref. 5; CAH56382." evidence="9" ref="5">
    <original>E</original>
    <variation>K</variation>
    <location>
        <position position="604"/>
    </location>
</feature>
<organism>
    <name type="scientific">Homo sapiens</name>
    <name type="common">Human</name>
    <dbReference type="NCBI Taxonomy" id="9606"/>
    <lineage>
        <taxon>Eukaryota</taxon>
        <taxon>Metazoa</taxon>
        <taxon>Chordata</taxon>
        <taxon>Craniata</taxon>
        <taxon>Vertebrata</taxon>
        <taxon>Euteleostomi</taxon>
        <taxon>Mammalia</taxon>
        <taxon>Eutheria</taxon>
        <taxon>Euarchontoglires</taxon>
        <taxon>Primates</taxon>
        <taxon>Haplorrhini</taxon>
        <taxon>Catarrhini</taxon>
        <taxon>Hominidae</taxon>
        <taxon>Homo</taxon>
    </lineage>
</organism>
<keyword id="KW-0025">Alternative splicing</keyword>
<keyword id="KW-0040">ANK repeat</keyword>
<keyword id="KW-0539">Nucleus</keyword>
<keyword id="KW-0597">Phosphoprotein</keyword>
<keyword id="KW-1267">Proteomics identification</keyword>
<keyword id="KW-1185">Reference proteome</keyword>
<keyword id="KW-0677">Repeat</keyword>
<sequence>MPKSGFTKPIQSENSDSDSNMVEKPYGRKSKDKIASYSKTPKIERSDVSKEMKEKSSMKRKLPFTISPSRNEERDSDTDSDPGHTSENWGERLISSYRTYSEKEGPEKKKTKKEAGNKKSTPVSILFGYPLSERKQMALLMQMTARDNSPDSTPNHPSQTTPAQKKTPSSSSRQKDKVNKRNERGETPLHMAAIRGDVKQVKELISLGANVNVKDFAGWTPLHEACNVGYYDVAKILIAAGADVNTQGLDDDTPLHDSASSGHRDIVKLLLRHGGNPFQANKHGERPVDVAETEELELLLKREVPLSDDDESYTDSEEAQSVNPSSVDENIDSETEKDSLICESKQILPSKTPLPSALDEYEFKDDDDEEINKMIDDRHILRKEQRKENEPEAEKTHLFAKQEKAFYPKSFKSKKQKPSRVLYSSTESSDEEALQNKKISTSCSVIPETSNSDMQTKKEYVVSGEHKQKGKVKRKLKNQNKNKENQELKQEKEGKENTRITNLTVNTGLDCSEKTREEGNFRKSFSPKDDTSLHLFHISTGKSPKHSCGLSEKQSTPLKQEHTKTCLSPGSSEMSLQPDLVRYDNTESEFLPESSSVKSCKHKEKSKHQKDFHLEFGEKSNAKIKDEDHSPTFENSDCTLKKMDKEGKTLKKHKLKHKEREKEKHKKEIEGEKEKYKTKDSAKELQRSVEFDREFWKENFFKSDETEDLFLNMEHESLTLEKKSKLEKNIKDDKSTKEKHVSKERNFKEERDKIKKESEKSFREEKIKDLKEERENIPTDKDSEFTSLGMSAIEESIGLHLVEKEIDIEKQEKHIKESKEKPEKRSQIKEKDIEKMERKTFEKEKKIKHEHKSEKDKLDLSECVDKIKEKDKLYSHHTEKCHKEGEKSKNTAAIKKTDDREKSREKMDRKHDKEKPEKERHLAESKEKHLMEKKNKQSDNSEYSKSEKGKNKEKDRELDKKEKSRDKESINITNSKHIQEEKKSSIVDGNKAQHEKPLSLKEKTKDEPLKTPDGKEKDKKDKDIDRYKERDKHKDKIQINSLLKLKSEADKPKPKSSPASKDTRPKEKRLVNDDLMQTSFERMLSLKDLEIEQWHKKHKEKIKQKEKERLRNRNCLELKIKDKEKTKHTPTESKNKELTRSKSSEVTDAYTKEKQPKDAVSNRSQSVDTKNVMTLGKSSFVSDNSLNRSPRSENEKPGLSSRSVSMISVASSEDSCHTTVTTPRPPVEYDSDFMLESSESQMSFSQSPFLSIAKSPALHERELDSLADLPERIKPPYANRLSTSHLRSSSVEDVKLIISEGRPTIEVRRCSMPSVICEHTKQFQTISEESNQGSLLTVPGDTSPSPKPEVFSNVPERDLSNVSNIHSSFATSPTGASNSKYVSADRNLIKNTAPVNTVMDSPVHLEPSSQVGVIQNKSWEMPVDRLETLSTRDFICPNSNIPDQESSLQSFCNSENKVLKENADFLSLRQTELPGNSCAQDPASFMPPQQPCSFPSQSLSDAESISKHMSLSYVANQEPGILQQKNAVQIISSALDTDNESTKDTENTFVLGDVQKTDAFVPVYSDSTIQEASPNFEKAYTLPVLPSEKDFNGSDASTQLNTHYAFSKLTYKSSSGHEVENSTTDTQVISHEKENKLESLVLTHLSRCDSDLCEMNAGMPKGNLNEQDPKHCPESEKCLLSIEDEESQQSILSSLENHSQQSTQPEMHKYGQLVKVELEENAEDDKTENQIPQRMTRNKANTMANQSKQILASCTLLSEKDSESSSPRGRIRLTEDDDPQIHHPRKRKVSRVPQPVQVSPSLLQAKEKTQQSLAAIVDSLKLDEIQPYSSERANPYFEYLHIRKKIEEKRKLLCSVIPQAPQYYDEYVTFNGSYLLDGNPLSKICIPTITPPPSLSDPLKELFRQQEVVRMKLRLQHSIEREKLIVSNEQEVLRVHYRAARTLANQTLPFSACTVLLDAEVYNVPLDSQSDDSKTSVRDRFNARQFMSWLQDVDDKFDKLKTCLLMRQQHEAAALNAVQRLEWQLKLQELDPATYKSISIYEIQEFYVPLVDVNDDFELTPI</sequence>
<gene>
    <name type="primary">ANKRD12</name>
    <name type="synonym">ANCO2</name>
    <name type="synonym">KIAA0874</name>
</gene>
<accession>Q6UB98</accession>
<accession>O94951</accession>
<accession>Q658K1</accession>
<accession>Q6QMF7</accession>
<accession>Q9H231</accession>
<accession>Q9H784</accession>
<protein>
    <recommendedName>
        <fullName>Ankyrin repeat domain-containing protein 12</fullName>
    </recommendedName>
    <alternativeName>
        <fullName>Ankyrin repeat-containing cofactor 2</fullName>
    </alternativeName>
    <alternativeName>
        <fullName>GAC-1 protein</fullName>
    </alternativeName>
</protein>